<reference key="1">
    <citation type="journal article" date="1994" name="Comp. Biochem. Physiol.">
        <title>Conservation of the tandem arrangement of alpha 1-microglobulin/bikunin mRNA: cloning of a cDNA from plaice (Pleuronectes platessa).</title>
        <authorList>
            <person name="Leaver M.J."/>
            <person name="Wright J."/>
            <person name="George S.G."/>
        </authorList>
    </citation>
    <scope>NUCLEOTIDE SEQUENCE [MRNA]</scope>
    <source>
        <tissue>Liver</tissue>
    </source>
</reference>
<name>AMBP_PLEPL</name>
<dbReference type="EMBL" id="X63762">
    <property type="protein sequence ID" value="CAA45294.1"/>
    <property type="molecule type" value="mRNA"/>
</dbReference>
<dbReference type="PIR" id="S22181">
    <property type="entry name" value="S22181"/>
</dbReference>
<dbReference type="SMR" id="P36992"/>
<dbReference type="MEROPS" id="I02.005"/>
<dbReference type="GO" id="GO:0005576">
    <property type="term" value="C:extracellular region"/>
    <property type="evidence" value="ECO:0007669"/>
    <property type="project" value="UniProtKB-SubCell"/>
</dbReference>
<dbReference type="GO" id="GO:0004867">
    <property type="term" value="F:serine-type endopeptidase inhibitor activity"/>
    <property type="evidence" value="ECO:0007669"/>
    <property type="project" value="UniProtKB-KW"/>
</dbReference>
<dbReference type="CDD" id="cd22596">
    <property type="entry name" value="Kunitz_bikunin_1-like"/>
    <property type="match status" value="1"/>
</dbReference>
<dbReference type="CDD" id="cd22597">
    <property type="entry name" value="Kunitz_bikunin_2-like"/>
    <property type="match status" value="1"/>
</dbReference>
<dbReference type="CDD" id="cd19418">
    <property type="entry name" value="lipocalin_A1M-like"/>
    <property type="match status" value="1"/>
</dbReference>
<dbReference type="FunFam" id="4.10.410.10:FF:000005">
    <property type="entry name" value="Pancreatic trypsin inhibitor"/>
    <property type="match status" value="1"/>
</dbReference>
<dbReference type="Gene3D" id="2.40.128.20">
    <property type="match status" value="1"/>
</dbReference>
<dbReference type="Gene3D" id="4.10.410.10">
    <property type="entry name" value="Pancreatic trypsin inhibitor Kunitz domain"/>
    <property type="match status" value="2"/>
</dbReference>
<dbReference type="InterPro" id="IPR002968">
    <property type="entry name" value="A1-microglobln"/>
</dbReference>
<dbReference type="InterPro" id="IPR029856">
    <property type="entry name" value="AMBP"/>
</dbReference>
<dbReference type="InterPro" id="IPR012674">
    <property type="entry name" value="Calycin"/>
</dbReference>
<dbReference type="InterPro" id="IPR002223">
    <property type="entry name" value="Kunitz_BPTI"/>
</dbReference>
<dbReference type="InterPro" id="IPR036880">
    <property type="entry name" value="Kunitz_BPTI_sf"/>
</dbReference>
<dbReference type="InterPro" id="IPR000566">
    <property type="entry name" value="Lipocln_cytosolic_FA-bd_dom"/>
</dbReference>
<dbReference type="InterPro" id="IPR020901">
    <property type="entry name" value="Prtase_inh_Kunz-CS"/>
</dbReference>
<dbReference type="PANTHER" id="PTHR46676">
    <property type="entry name" value="PROTEIN AMBP"/>
    <property type="match status" value="1"/>
</dbReference>
<dbReference type="PANTHER" id="PTHR46676:SF1">
    <property type="entry name" value="PROTEIN AMBP"/>
    <property type="match status" value="1"/>
</dbReference>
<dbReference type="Pfam" id="PF00014">
    <property type="entry name" value="Kunitz_BPTI"/>
    <property type="match status" value="2"/>
</dbReference>
<dbReference type="Pfam" id="PF00061">
    <property type="entry name" value="Lipocalin"/>
    <property type="match status" value="1"/>
</dbReference>
<dbReference type="PRINTS" id="PR01215">
    <property type="entry name" value="A1MCGLOBULIN"/>
</dbReference>
<dbReference type="PRINTS" id="PR00759">
    <property type="entry name" value="BASICPTASE"/>
</dbReference>
<dbReference type="PRINTS" id="PR00179">
    <property type="entry name" value="LIPOCALIN"/>
</dbReference>
<dbReference type="SMART" id="SM00131">
    <property type="entry name" value="KU"/>
    <property type="match status" value="2"/>
</dbReference>
<dbReference type="SUPFAM" id="SSF57362">
    <property type="entry name" value="BPTI-like"/>
    <property type="match status" value="2"/>
</dbReference>
<dbReference type="SUPFAM" id="SSF50814">
    <property type="entry name" value="Lipocalins"/>
    <property type="match status" value="1"/>
</dbReference>
<dbReference type="PROSITE" id="PS00280">
    <property type="entry name" value="BPTI_KUNITZ_1"/>
    <property type="match status" value="1"/>
</dbReference>
<dbReference type="PROSITE" id="PS50279">
    <property type="entry name" value="BPTI_KUNITZ_2"/>
    <property type="match status" value="2"/>
</dbReference>
<comment type="subunit">
    <text evidence="1">I-alpha-I plasma protease inhibitors are assembled from one or two heavy chains (H1, H2 or H3) and one light chain, bikunin. Inter-alpha-inhibitor (I-alpha-I) is composed of H1, H2 and bikunin, inter-alpha-like inhibitor (I-alpha-LI) of H2 and bikunin, and pre-alpha-inhibitor (P-alpha-I) of H3 and bikunin (By similarity).</text>
</comment>
<comment type="subcellular location">
    <subcellularLocation>
        <location evidence="1">Secreted</location>
    </subcellularLocation>
</comment>
<comment type="tissue specificity">
    <text>Expressed by the liver and secreted in plasma.</text>
</comment>
<comment type="PTM">
    <text evidence="1">The precursor is proteolytically processed into two separately functioning proteins.</text>
</comment>
<comment type="PTM">
    <text evidence="1">3-hydroxykynurenine, an oxidized tryptophan metabolite that is common in biological fluids, reacts with Cys-55, Lys-138, and Lys-150 to form heterogeneous polycyclic chromophores including hydroxanthommatin. The reaction by alpha-1-microglobulin is autocatalytic. The chromophore can react with accessible cysteines forming non-reducible thioether cross-links with other molecules of alpha-1-microglobulin or with other proteins (By similarity).</text>
</comment>
<comment type="similarity">
    <text evidence="4">In the N-terminal section; belongs to the calycin superfamily. Lipocalin family.</text>
</comment>
<evidence type="ECO:0000250" key="1"/>
<evidence type="ECO:0000255" key="2"/>
<evidence type="ECO:0000255" key="3">
    <source>
        <dbReference type="PROSITE-ProRule" id="PRU00031"/>
    </source>
</evidence>
<evidence type="ECO:0000305" key="4"/>
<protein>
    <recommendedName>
        <fullName>Protein AMBP</fullName>
    </recommendedName>
    <component>
        <recommendedName>
            <fullName>Alpha-1-microglobulin</fullName>
        </recommendedName>
    </component>
    <component>
        <recommendedName>
            <fullName>Inter-alpha-trypsin inhibitor light chain</fullName>
            <shortName>ITI-LC</shortName>
        </recommendedName>
        <alternativeName>
            <fullName>Bikunin</fullName>
        </alternativeName>
        <alternativeName>
            <fullName>HI-30</fullName>
        </alternativeName>
    </component>
</protein>
<accession>P36992</accession>
<proteinExistence type="evidence at transcript level"/>
<keyword id="KW-0157">Chromophore</keyword>
<keyword id="KW-0165">Cleavage on pair of basic residues</keyword>
<keyword id="KW-1015">Disulfide bond</keyword>
<keyword id="KW-0325">Glycoprotein</keyword>
<keyword id="KW-0646">Protease inhibitor</keyword>
<keyword id="KW-0677">Repeat</keyword>
<keyword id="KW-0964">Secreted</keyword>
<keyword id="KW-0722">Serine protease inhibitor</keyword>
<keyword id="KW-0732">Signal</keyword>
<organism>
    <name type="scientific">Pleuronectes platessa</name>
    <name type="common">European plaice</name>
    <dbReference type="NCBI Taxonomy" id="8262"/>
    <lineage>
        <taxon>Eukaryota</taxon>
        <taxon>Metazoa</taxon>
        <taxon>Chordata</taxon>
        <taxon>Craniata</taxon>
        <taxon>Vertebrata</taxon>
        <taxon>Euteleostomi</taxon>
        <taxon>Actinopterygii</taxon>
        <taxon>Neopterygii</taxon>
        <taxon>Teleostei</taxon>
        <taxon>Neoteleostei</taxon>
        <taxon>Acanthomorphata</taxon>
        <taxon>Carangaria</taxon>
        <taxon>Pleuronectiformes</taxon>
        <taxon>Pleuronectoidei</taxon>
        <taxon>Pleuronectidae</taxon>
        <taxon>Pleuronectes</taxon>
    </lineage>
</organism>
<sequence>RLKTTVVLVPLLLLGWTGTLQGLPVLPEPLYPTQENFDLTRFVGTWHDVALTSSCPHMQRNRADAAIGKLVLEKDTGNKLKVTRTRLRHGTCVEMSGEYELTSTPGRIFYHIDRWDADVDAYVVHTNYDEYAIIIMSKQKTSGENSTSLKLYSRTMSVRDTVLDDFKTLVRHQGMSDDTIIIKQNKGDCIPGEQVEEAPSQPEPKRLRRQVLPTLALSDEEGSGDMSALFNDSEACKAAPETGPCFGFIQGFFYNSTSMRCELFTYGGCLGNQNNFVTVRECLQRCRTEAVCRLPMAPEPCTGQPTIWAFDFVTGSCMPYKDGICQANANQFYSRAECQEYCGVIKDDGELLTAS</sequence>
<feature type="signal peptide" evidence="2">
    <location>
        <begin position="1" status="less than"/>
        <end status="unknown"/>
    </location>
</feature>
<feature type="chain" id="PRO_0000017900" description="Alpha-1-microglobulin">
    <location>
        <begin status="unknown"/>
        <end position="204"/>
    </location>
</feature>
<feature type="chain" id="PRO_0000017901" description="Inter-alpha-trypsin inhibitor light chain">
    <location>
        <begin position="210"/>
        <end position="355"/>
    </location>
</feature>
<feature type="domain" description="BPTI/Kunitz inhibitor 1" evidence="3">
    <location>
        <begin position="236"/>
        <end position="286"/>
    </location>
</feature>
<feature type="domain" description="BPTI/Kunitz inhibitor 2" evidence="3">
    <location>
        <begin position="292"/>
        <end position="342"/>
    </location>
</feature>
<feature type="binding site" description="covalent" evidence="1">
    <location>
        <position position="55"/>
    </location>
    <ligand>
        <name>3-hydroxy-L-kynurenine</name>
        <dbReference type="ChEBI" id="CHEBI:58125"/>
        <note>multimeric 3-hydroxykynurenine chromophore</note>
    </ligand>
</feature>
<feature type="binding site" description="covalent" evidence="1">
    <location>
        <position position="138"/>
    </location>
    <ligand>
        <name>3-hydroxy-L-kynurenine</name>
        <dbReference type="ChEBI" id="CHEBI:58125"/>
        <note>multimeric 3-hydroxykynurenine chromophore</note>
    </ligand>
</feature>
<feature type="binding site" description="covalent" evidence="1">
    <location>
        <position position="150"/>
    </location>
    <ligand>
        <name>3-hydroxy-L-kynurenine</name>
        <dbReference type="ChEBI" id="CHEBI:58125"/>
        <note>multimeric 3-hydroxykynurenine chromophore</note>
    </ligand>
</feature>
<feature type="glycosylation site" description="N-linked (GlcNAc...) asparagine" evidence="2">
    <location>
        <position position="145"/>
    </location>
</feature>
<feature type="glycosylation site" description="N-linked (GlcNAc...) asparagine" evidence="2">
    <location>
        <position position="231"/>
    </location>
</feature>
<feature type="glycosylation site" description="N-linked (GlcNAc...) asparagine" evidence="2">
    <location>
        <position position="255"/>
    </location>
</feature>
<feature type="disulfide bond" evidence="3">
    <location>
        <begin position="92"/>
        <end position="189"/>
    </location>
</feature>
<feature type="disulfide bond" evidence="3">
    <location>
        <begin position="236"/>
        <end position="286"/>
    </location>
</feature>
<feature type="disulfide bond" evidence="3">
    <location>
        <begin position="245"/>
        <end position="269"/>
    </location>
</feature>
<feature type="disulfide bond" evidence="3">
    <location>
        <begin position="261"/>
        <end position="282"/>
    </location>
</feature>
<feature type="disulfide bond" evidence="3">
    <location>
        <begin position="292"/>
        <end position="342"/>
    </location>
</feature>
<feature type="disulfide bond" evidence="3">
    <location>
        <begin position="301"/>
        <end position="325"/>
    </location>
</feature>
<feature type="disulfide bond" evidence="3">
    <location>
        <begin position="317"/>
        <end position="338"/>
    </location>
</feature>
<feature type="non-terminal residue">
    <location>
        <position position="1"/>
    </location>
</feature>